<keyword id="KW-0030">Aminoacyl-tRNA synthetase</keyword>
<keyword id="KW-0067">ATP-binding</keyword>
<keyword id="KW-0963">Cytoplasm</keyword>
<keyword id="KW-0436">Ligase</keyword>
<keyword id="KW-0479">Metal-binding</keyword>
<keyword id="KW-0547">Nucleotide-binding</keyword>
<keyword id="KW-0648">Protein biosynthesis</keyword>
<keyword id="KW-1185">Reference proteome</keyword>
<keyword id="KW-0694">RNA-binding</keyword>
<keyword id="KW-0820">tRNA-binding</keyword>
<keyword id="KW-0862">Zinc</keyword>
<dbReference type="EC" id="6.1.1.10" evidence="1"/>
<dbReference type="EMBL" id="BX294142">
    <property type="protein sequence ID" value="CAD74295.1"/>
    <property type="molecule type" value="Genomic_DNA"/>
</dbReference>
<dbReference type="RefSeq" id="NP_866755.1">
    <property type="nucleotide sequence ID" value="NC_005027.1"/>
</dbReference>
<dbReference type="RefSeq" id="WP_011120499.1">
    <property type="nucleotide sequence ID" value="NC_005027.1"/>
</dbReference>
<dbReference type="SMR" id="Q7URP3"/>
<dbReference type="FunCoup" id="Q7URP3">
    <property type="interactions" value="537"/>
</dbReference>
<dbReference type="STRING" id="243090.RB5543"/>
<dbReference type="EnsemblBacteria" id="CAD74295">
    <property type="protein sequence ID" value="CAD74295"/>
    <property type="gene ID" value="RB5543"/>
</dbReference>
<dbReference type="KEGG" id="rba:RB5543"/>
<dbReference type="PATRIC" id="fig|243090.15.peg.2661"/>
<dbReference type="eggNOG" id="COG0073">
    <property type="taxonomic scope" value="Bacteria"/>
</dbReference>
<dbReference type="eggNOG" id="COG0143">
    <property type="taxonomic scope" value="Bacteria"/>
</dbReference>
<dbReference type="HOGENOM" id="CLU_009710_7_0_0"/>
<dbReference type="InParanoid" id="Q7URP3"/>
<dbReference type="OrthoDB" id="9810191at2"/>
<dbReference type="Proteomes" id="UP000001025">
    <property type="component" value="Chromosome"/>
</dbReference>
<dbReference type="GO" id="GO:0005829">
    <property type="term" value="C:cytosol"/>
    <property type="evidence" value="ECO:0000318"/>
    <property type="project" value="GO_Central"/>
</dbReference>
<dbReference type="GO" id="GO:0005524">
    <property type="term" value="F:ATP binding"/>
    <property type="evidence" value="ECO:0007669"/>
    <property type="project" value="UniProtKB-UniRule"/>
</dbReference>
<dbReference type="GO" id="GO:0046872">
    <property type="term" value="F:metal ion binding"/>
    <property type="evidence" value="ECO:0007669"/>
    <property type="project" value="UniProtKB-KW"/>
</dbReference>
<dbReference type="GO" id="GO:0004825">
    <property type="term" value="F:methionine-tRNA ligase activity"/>
    <property type="evidence" value="ECO:0000318"/>
    <property type="project" value="GO_Central"/>
</dbReference>
<dbReference type="GO" id="GO:0000049">
    <property type="term" value="F:tRNA binding"/>
    <property type="evidence" value="ECO:0007669"/>
    <property type="project" value="UniProtKB-KW"/>
</dbReference>
<dbReference type="GO" id="GO:0006431">
    <property type="term" value="P:methionyl-tRNA aminoacylation"/>
    <property type="evidence" value="ECO:0000318"/>
    <property type="project" value="GO_Central"/>
</dbReference>
<dbReference type="CDD" id="cd07957">
    <property type="entry name" value="Anticodon_Ia_Met"/>
    <property type="match status" value="1"/>
</dbReference>
<dbReference type="CDD" id="cd00814">
    <property type="entry name" value="MetRS_core"/>
    <property type="match status" value="1"/>
</dbReference>
<dbReference type="CDD" id="cd02800">
    <property type="entry name" value="tRNA_bind_EcMetRS_like"/>
    <property type="match status" value="1"/>
</dbReference>
<dbReference type="FunFam" id="2.20.28.20:FF:000001">
    <property type="entry name" value="Methionine--tRNA ligase"/>
    <property type="match status" value="1"/>
</dbReference>
<dbReference type="FunFam" id="2.40.50.140:FF:000042">
    <property type="entry name" value="Methionine--tRNA ligase"/>
    <property type="match status" value="1"/>
</dbReference>
<dbReference type="Gene3D" id="3.40.50.620">
    <property type="entry name" value="HUPs"/>
    <property type="match status" value="1"/>
</dbReference>
<dbReference type="Gene3D" id="1.10.730.10">
    <property type="entry name" value="Isoleucyl-tRNA Synthetase, Domain 1"/>
    <property type="match status" value="1"/>
</dbReference>
<dbReference type="Gene3D" id="2.20.28.20">
    <property type="entry name" value="Methionyl-tRNA synthetase, Zn-domain"/>
    <property type="match status" value="1"/>
</dbReference>
<dbReference type="Gene3D" id="2.40.50.140">
    <property type="entry name" value="Nucleic acid-binding proteins"/>
    <property type="match status" value="1"/>
</dbReference>
<dbReference type="HAMAP" id="MF_00098">
    <property type="entry name" value="Met_tRNA_synth_type1"/>
    <property type="match status" value="1"/>
</dbReference>
<dbReference type="InterPro" id="IPR001412">
    <property type="entry name" value="aa-tRNA-synth_I_CS"/>
</dbReference>
<dbReference type="InterPro" id="IPR041872">
    <property type="entry name" value="Anticodon_Met"/>
</dbReference>
<dbReference type="InterPro" id="IPR004495">
    <property type="entry name" value="Met-tRNA-synth_bsu_C"/>
</dbReference>
<dbReference type="InterPro" id="IPR023458">
    <property type="entry name" value="Met-tRNA_ligase_1"/>
</dbReference>
<dbReference type="InterPro" id="IPR014758">
    <property type="entry name" value="Met-tRNA_synth"/>
</dbReference>
<dbReference type="InterPro" id="IPR015413">
    <property type="entry name" value="Methionyl/Leucyl_tRNA_Synth"/>
</dbReference>
<dbReference type="InterPro" id="IPR033911">
    <property type="entry name" value="MetRS_core"/>
</dbReference>
<dbReference type="InterPro" id="IPR029038">
    <property type="entry name" value="MetRS_Zn"/>
</dbReference>
<dbReference type="InterPro" id="IPR012340">
    <property type="entry name" value="NA-bd_OB-fold"/>
</dbReference>
<dbReference type="InterPro" id="IPR014729">
    <property type="entry name" value="Rossmann-like_a/b/a_fold"/>
</dbReference>
<dbReference type="InterPro" id="IPR002547">
    <property type="entry name" value="tRNA-bd_dom"/>
</dbReference>
<dbReference type="InterPro" id="IPR009080">
    <property type="entry name" value="tRNAsynth_Ia_anticodon-bd"/>
</dbReference>
<dbReference type="NCBIfam" id="TIGR00398">
    <property type="entry name" value="metG"/>
    <property type="match status" value="1"/>
</dbReference>
<dbReference type="NCBIfam" id="TIGR00399">
    <property type="entry name" value="metG_C_term"/>
    <property type="match status" value="1"/>
</dbReference>
<dbReference type="NCBIfam" id="NF001100">
    <property type="entry name" value="PRK00133.1"/>
    <property type="match status" value="1"/>
</dbReference>
<dbReference type="PANTHER" id="PTHR45765">
    <property type="entry name" value="METHIONINE--TRNA LIGASE"/>
    <property type="match status" value="1"/>
</dbReference>
<dbReference type="PANTHER" id="PTHR45765:SF1">
    <property type="entry name" value="METHIONINE--TRNA LIGASE, CYTOPLASMIC"/>
    <property type="match status" value="1"/>
</dbReference>
<dbReference type="Pfam" id="PF09334">
    <property type="entry name" value="tRNA-synt_1g"/>
    <property type="match status" value="1"/>
</dbReference>
<dbReference type="Pfam" id="PF01588">
    <property type="entry name" value="tRNA_bind"/>
    <property type="match status" value="1"/>
</dbReference>
<dbReference type="PRINTS" id="PR01041">
    <property type="entry name" value="TRNASYNTHMET"/>
</dbReference>
<dbReference type="SUPFAM" id="SSF47323">
    <property type="entry name" value="Anticodon-binding domain of a subclass of class I aminoacyl-tRNA synthetases"/>
    <property type="match status" value="1"/>
</dbReference>
<dbReference type="SUPFAM" id="SSF57770">
    <property type="entry name" value="Methionyl-tRNA synthetase (MetRS), Zn-domain"/>
    <property type="match status" value="1"/>
</dbReference>
<dbReference type="SUPFAM" id="SSF50249">
    <property type="entry name" value="Nucleic acid-binding proteins"/>
    <property type="match status" value="1"/>
</dbReference>
<dbReference type="SUPFAM" id="SSF52374">
    <property type="entry name" value="Nucleotidylyl transferase"/>
    <property type="match status" value="1"/>
</dbReference>
<dbReference type="PROSITE" id="PS00178">
    <property type="entry name" value="AA_TRNA_LIGASE_I"/>
    <property type="match status" value="1"/>
</dbReference>
<dbReference type="PROSITE" id="PS50886">
    <property type="entry name" value="TRBD"/>
    <property type="match status" value="1"/>
</dbReference>
<accession>Q7URP3</accession>
<evidence type="ECO:0000255" key="1">
    <source>
        <dbReference type="HAMAP-Rule" id="MF_00098"/>
    </source>
</evidence>
<evidence type="ECO:0000256" key="2">
    <source>
        <dbReference type="SAM" id="MobiDB-lite"/>
    </source>
</evidence>
<sequence length="679" mass="75693">MTRRLLVTAALPYANGPIHIGHLVEYLQTDIWVRFQKLRGNRCLYICADDTHGTAIMIRARGEGRSEIELIEETSEAHQRDFAGFGIEFDHYGSTNSEENRTLCHQIWKSLRDADLVVERSVEQLYDPEAETFLADRFVRGTCPKCGTPNQAGDNCNCGHTYSPTELIDPVSTLSGATPIIKEAEHLFVELEKLHDFLSEWVSNSGALQPETANYLKGHFLADELRDWDISRPAPYFGFEIPDAPGNYWYVWFDAPIGYIASTQQWCDANGEDLADWWKSDDCEVHHFIGKDITYFHTLFWPGMLKTAGFSLPTKVHIHGFLNVNGKKMSKSDGTFVKAETFLKHIDPSALRYFYATKLSSRVEDLDLGVDEFVEKVNSDLVGKVVNLASRVGKFASRTGLAPSYPEDGGLFQAAAAKGDEIASAYEDGEFSKAMRLIMELADAANPFVEHAKPWEMNKAPERQDELRDVCTVALNLFRQLAVYLAPVLPELAKKCGDLLGEPITSWEQSQTPLVDRGVNKFQRMMDRVKTEDLEAMMEESKDEAAQETGAAATNPFNDSDQPLKDEPLADEITIDDFMKVDLRVARVLSAEHVPEANKLLKLTLGLGGDETRQVFAGIKAAYDPEKLVGRLVVMVANLKPRKMRFGLSEGMVTAAGPGGEEVFVLGIDEGALPGQRVH</sequence>
<feature type="chain" id="PRO_0000139158" description="Methionine--tRNA ligase">
    <location>
        <begin position="1"/>
        <end position="679"/>
    </location>
</feature>
<feature type="domain" description="tRNA-binding" evidence="1">
    <location>
        <begin position="577"/>
        <end position="679"/>
    </location>
</feature>
<feature type="region of interest" description="Disordered" evidence="2">
    <location>
        <begin position="537"/>
        <end position="564"/>
    </location>
</feature>
<feature type="short sequence motif" description="'HIGH' region">
    <location>
        <begin position="12"/>
        <end position="22"/>
    </location>
</feature>
<feature type="short sequence motif" description="'KMSKS' region">
    <location>
        <begin position="328"/>
        <end position="332"/>
    </location>
</feature>
<feature type="binding site" evidence="1">
    <location>
        <position position="143"/>
    </location>
    <ligand>
        <name>Zn(2+)</name>
        <dbReference type="ChEBI" id="CHEBI:29105"/>
    </ligand>
</feature>
<feature type="binding site" evidence="1">
    <location>
        <position position="146"/>
    </location>
    <ligand>
        <name>Zn(2+)</name>
        <dbReference type="ChEBI" id="CHEBI:29105"/>
    </ligand>
</feature>
<feature type="binding site" evidence="1">
    <location>
        <position position="156"/>
    </location>
    <ligand>
        <name>Zn(2+)</name>
        <dbReference type="ChEBI" id="CHEBI:29105"/>
    </ligand>
</feature>
<feature type="binding site" evidence="1">
    <location>
        <position position="158"/>
    </location>
    <ligand>
        <name>Zn(2+)</name>
        <dbReference type="ChEBI" id="CHEBI:29105"/>
    </ligand>
</feature>
<feature type="binding site" evidence="1">
    <location>
        <position position="331"/>
    </location>
    <ligand>
        <name>ATP</name>
        <dbReference type="ChEBI" id="CHEBI:30616"/>
    </ligand>
</feature>
<name>SYM_RHOBA</name>
<reference key="1">
    <citation type="journal article" date="2003" name="Proc. Natl. Acad. Sci. U.S.A.">
        <title>Complete genome sequence of the marine planctomycete Pirellula sp. strain 1.</title>
        <authorList>
            <person name="Gloeckner F.O."/>
            <person name="Kube M."/>
            <person name="Bauer M."/>
            <person name="Teeling H."/>
            <person name="Lombardot T."/>
            <person name="Ludwig W."/>
            <person name="Gade D."/>
            <person name="Beck A."/>
            <person name="Borzym K."/>
            <person name="Heitmann K."/>
            <person name="Rabus R."/>
            <person name="Schlesner H."/>
            <person name="Amann R."/>
            <person name="Reinhardt R."/>
        </authorList>
    </citation>
    <scope>NUCLEOTIDE SEQUENCE [LARGE SCALE GENOMIC DNA]</scope>
    <source>
        <strain>DSM 10527 / NCIMB 13988 / SH1</strain>
    </source>
</reference>
<proteinExistence type="inferred from homology"/>
<organism>
    <name type="scientific">Rhodopirellula baltica (strain DSM 10527 / NCIMB 13988 / SH1)</name>
    <dbReference type="NCBI Taxonomy" id="243090"/>
    <lineage>
        <taxon>Bacteria</taxon>
        <taxon>Pseudomonadati</taxon>
        <taxon>Planctomycetota</taxon>
        <taxon>Planctomycetia</taxon>
        <taxon>Pirellulales</taxon>
        <taxon>Pirellulaceae</taxon>
        <taxon>Rhodopirellula</taxon>
    </lineage>
</organism>
<protein>
    <recommendedName>
        <fullName evidence="1">Methionine--tRNA ligase</fullName>
        <ecNumber evidence="1">6.1.1.10</ecNumber>
    </recommendedName>
    <alternativeName>
        <fullName evidence="1">Methionyl-tRNA synthetase</fullName>
        <shortName evidence="1">MetRS</shortName>
    </alternativeName>
</protein>
<gene>
    <name evidence="1" type="primary">metG</name>
    <name type="ordered locus">RB5543</name>
</gene>
<comment type="function">
    <text evidence="1">Is required not only for elongation of protein synthesis but also for the initiation of all mRNA translation through initiator tRNA(fMet) aminoacylation.</text>
</comment>
<comment type="catalytic activity">
    <reaction evidence="1">
        <text>tRNA(Met) + L-methionine + ATP = L-methionyl-tRNA(Met) + AMP + diphosphate</text>
        <dbReference type="Rhea" id="RHEA:13481"/>
        <dbReference type="Rhea" id="RHEA-COMP:9667"/>
        <dbReference type="Rhea" id="RHEA-COMP:9698"/>
        <dbReference type="ChEBI" id="CHEBI:30616"/>
        <dbReference type="ChEBI" id="CHEBI:33019"/>
        <dbReference type="ChEBI" id="CHEBI:57844"/>
        <dbReference type="ChEBI" id="CHEBI:78442"/>
        <dbReference type="ChEBI" id="CHEBI:78530"/>
        <dbReference type="ChEBI" id="CHEBI:456215"/>
        <dbReference type="EC" id="6.1.1.10"/>
    </reaction>
</comment>
<comment type="cofactor">
    <cofactor evidence="1">
        <name>Zn(2+)</name>
        <dbReference type="ChEBI" id="CHEBI:29105"/>
    </cofactor>
    <text evidence="1">Binds 1 zinc ion per subunit.</text>
</comment>
<comment type="subunit">
    <text evidence="1">Homodimer.</text>
</comment>
<comment type="subcellular location">
    <subcellularLocation>
        <location evidence="1">Cytoplasm</location>
    </subcellularLocation>
</comment>
<comment type="similarity">
    <text evidence="1">Belongs to the class-I aminoacyl-tRNA synthetase family. MetG type 1 subfamily.</text>
</comment>